<evidence type="ECO:0000255" key="1">
    <source>
        <dbReference type="HAMAP-Rule" id="MF_00300"/>
    </source>
</evidence>
<keyword id="KW-0028">Amino-acid biosynthesis</keyword>
<keyword id="KW-0057">Aromatic amino acid biosynthesis</keyword>
<keyword id="KW-0274">FAD</keyword>
<keyword id="KW-0285">Flavoprotein</keyword>
<keyword id="KW-0288">FMN</keyword>
<keyword id="KW-0456">Lyase</keyword>
<keyword id="KW-0521">NADP</keyword>
<feature type="chain" id="PRO_0000322412" description="Chorismate synthase">
    <location>
        <begin position="1"/>
        <end position="404"/>
    </location>
</feature>
<feature type="binding site" evidence="1">
    <location>
        <position position="40"/>
    </location>
    <ligand>
        <name>NADP(+)</name>
        <dbReference type="ChEBI" id="CHEBI:58349"/>
    </ligand>
</feature>
<feature type="binding site" evidence="1">
    <location>
        <position position="46"/>
    </location>
    <ligand>
        <name>NADP(+)</name>
        <dbReference type="ChEBI" id="CHEBI:58349"/>
    </ligand>
</feature>
<feature type="binding site" evidence="1">
    <location>
        <begin position="135"/>
        <end position="137"/>
    </location>
    <ligand>
        <name>FMN</name>
        <dbReference type="ChEBI" id="CHEBI:58210"/>
    </ligand>
</feature>
<feature type="binding site" evidence="1">
    <location>
        <begin position="256"/>
        <end position="257"/>
    </location>
    <ligand>
        <name>FMN</name>
        <dbReference type="ChEBI" id="CHEBI:58210"/>
    </ligand>
</feature>
<feature type="binding site" evidence="1">
    <location>
        <position position="300"/>
    </location>
    <ligand>
        <name>FMN</name>
        <dbReference type="ChEBI" id="CHEBI:58210"/>
    </ligand>
</feature>
<feature type="binding site" evidence="1">
    <location>
        <begin position="315"/>
        <end position="319"/>
    </location>
    <ligand>
        <name>FMN</name>
        <dbReference type="ChEBI" id="CHEBI:58210"/>
    </ligand>
</feature>
<feature type="binding site" evidence="1">
    <location>
        <position position="341"/>
    </location>
    <ligand>
        <name>FMN</name>
        <dbReference type="ChEBI" id="CHEBI:58210"/>
    </ligand>
</feature>
<organism>
    <name type="scientific">Mycobacterium sp. (strain KMS)</name>
    <dbReference type="NCBI Taxonomy" id="189918"/>
    <lineage>
        <taxon>Bacteria</taxon>
        <taxon>Bacillati</taxon>
        <taxon>Actinomycetota</taxon>
        <taxon>Actinomycetes</taxon>
        <taxon>Mycobacteriales</taxon>
        <taxon>Mycobacteriaceae</taxon>
        <taxon>Mycobacterium</taxon>
    </lineage>
</organism>
<proteinExistence type="inferred from homology"/>
<protein>
    <recommendedName>
        <fullName evidence="1">Chorismate synthase</fullName>
        <shortName evidence="1">CS</shortName>
        <ecNumber evidence="1">4.2.3.5</ecNumber>
    </recommendedName>
    <alternativeName>
        <fullName evidence="1">5-enolpyruvylshikimate-3-phosphate phospholyase</fullName>
    </alternativeName>
</protein>
<sequence length="404" mass="42286">MLRWTTAGESHGRALVAVLEGMVAGVSLTTEDIGAQLRRRRLGYGRGARMKFEQDEITMLGGVRHGVTLGGPIAIQIGNTEWPKWETVMAADPVDPAELAEIARNAPLTRPRPGHADYAGMLKYGFDDARPVLERASARETAARVAAGTVARAFLRQALGVEVVSHVISIGASTPYDGPPPQPADLTAIDDSPVRAFDEAAEKSMIAEIEAAKRDGDTLGGVVEVVVSGLPVGLGSFTSGDNRLDSQLAAAVMGIQAIKGVEIGDGFETARRRGSVAHDEIYPGPDGVVRSTNRAGGLEGGMTNGQPLRVRAAMKPISTVPRALATVDMTTGDEAVAIHQRSDVCAVPAAGVVVETMVALVLARAALQKFGGDSLTETRTNVESYLRAVAAREPATAQRAQASG</sequence>
<reference key="1">
    <citation type="submission" date="2006-12" db="EMBL/GenBank/DDBJ databases">
        <title>Complete sequence of chromosome of Mycobacterium sp. KMS.</title>
        <authorList>
            <consortium name="US DOE Joint Genome Institute"/>
            <person name="Copeland A."/>
            <person name="Lucas S."/>
            <person name="Lapidus A."/>
            <person name="Barry K."/>
            <person name="Detter J.C."/>
            <person name="Glavina del Rio T."/>
            <person name="Hammon N."/>
            <person name="Israni S."/>
            <person name="Dalin E."/>
            <person name="Tice H."/>
            <person name="Pitluck S."/>
            <person name="Kiss H."/>
            <person name="Brettin T."/>
            <person name="Bruce D."/>
            <person name="Han C."/>
            <person name="Tapia R."/>
            <person name="Gilna P."/>
            <person name="Schmutz J."/>
            <person name="Larimer F."/>
            <person name="Land M."/>
            <person name="Hauser L."/>
            <person name="Kyrpides N."/>
            <person name="Mikhailova N."/>
            <person name="Miller C.D."/>
            <person name="Richardson P."/>
        </authorList>
    </citation>
    <scope>NUCLEOTIDE SEQUENCE [LARGE SCALE GENOMIC DNA]</scope>
    <source>
        <strain>KMS</strain>
    </source>
</reference>
<gene>
    <name evidence="1" type="primary">aroC</name>
    <name type="ordered locus">Mkms_2399</name>
</gene>
<dbReference type="EC" id="4.2.3.5" evidence="1"/>
<dbReference type="EMBL" id="CP000518">
    <property type="protein sequence ID" value="ABL91597.1"/>
    <property type="molecule type" value="Genomic_DNA"/>
</dbReference>
<dbReference type="SMR" id="A1UFI9"/>
<dbReference type="STRING" id="189918.Mkms_2399"/>
<dbReference type="KEGG" id="mkm:Mkms_2399"/>
<dbReference type="HOGENOM" id="CLU_034547_2_0_11"/>
<dbReference type="OrthoDB" id="9771806at2"/>
<dbReference type="UniPathway" id="UPA00053">
    <property type="reaction ID" value="UER00090"/>
</dbReference>
<dbReference type="GO" id="GO:0005829">
    <property type="term" value="C:cytosol"/>
    <property type="evidence" value="ECO:0007669"/>
    <property type="project" value="TreeGrafter"/>
</dbReference>
<dbReference type="GO" id="GO:0004107">
    <property type="term" value="F:chorismate synthase activity"/>
    <property type="evidence" value="ECO:0007669"/>
    <property type="project" value="UniProtKB-UniRule"/>
</dbReference>
<dbReference type="GO" id="GO:0010181">
    <property type="term" value="F:FMN binding"/>
    <property type="evidence" value="ECO:0007669"/>
    <property type="project" value="TreeGrafter"/>
</dbReference>
<dbReference type="GO" id="GO:0008652">
    <property type="term" value="P:amino acid biosynthetic process"/>
    <property type="evidence" value="ECO:0007669"/>
    <property type="project" value="UniProtKB-KW"/>
</dbReference>
<dbReference type="GO" id="GO:0009073">
    <property type="term" value="P:aromatic amino acid family biosynthetic process"/>
    <property type="evidence" value="ECO:0007669"/>
    <property type="project" value="UniProtKB-KW"/>
</dbReference>
<dbReference type="GO" id="GO:0009423">
    <property type="term" value="P:chorismate biosynthetic process"/>
    <property type="evidence" value="ECO:0007669"/>
    <property type="project" value="UniProtKB-UniRule"/>
</dbReference>
<dbReference type="CDD" id="cd07304">
    <property type="entry name" value="Chorismate_synthase"/>
    <property type="match status" value="1"/>
</dbReference>
<dbReference type="FunFam" id="3.60.150.10:FF:000002">
    <property type="entry name" value="Chorismate synthase"/>
    <property type="match status" value="1"/>
</dbReference>
<dbReference type="Gene3D" id="3.60.150.10">
    <property type="entry name" value="Chorismate synthase AroC"/>
    <property type="match status" value="1"/>
</dbReference>
<dbReference type="HAMAP" id="MF_00300">
    <property type="entry name" value="Chorismate_synth"/>
    <property type="match status" value="1"/>
</dbReference>
<dbReference type="InterPro" id="IPR000453">
    <property type="entry name" value="Chorismate_synth"/>
</dbReference>
<dbReference type="InterPro" id="IPR035904">
    <property type="entry name" value="Chorismate_synth_AroC_sf"/>
</dbReference>
<dbReference type="InterPro" id="IPR020541">
    <property type="entry name" value="Chorismate_synthase_CS"/>
</dbReference>
<dbReference type="NCBIfam" id="TIGR00033">
    <property type="entry name" value="aroC"/>
    <property type="match status" value="1"/>
</dbReference>
<dbReference type="NCBIfam" id="NF003793">
    <property type="entry name" value="PRK05382.1"/>
    <property type="match status" value="1"/>
</dbReference>
<dbReference type="PANTHER" id="PTHR21085">
    <property type="entry name" value="CHORISMATE SYNTHASE"/>
    <property type="match status" value="1"/>
</dbReference>
<dbReference type="PANTHER" id="PTHR21085:SF0">
    <property type="entry name" value="CHORISMATE SYNTHASE"/>
    <property type="match status" value="1"/>
</dbReference>
<dbReference type="Pfam" id="PF01264">
    <property type="entry name" value="Chorismate_synt"/>
    <property type="match status" value="1"/>
</dbReference>
<dbReference type="PIRSF" id="PIRSF001456">
    <property type="entry name" value="Chorismate_synth"/>
    <property type="match status" value="1"/>
</dbReference>
<dbReference type="SUPFAM" id="SSF103263">
    <property type="entry name" value="Chorismate synthase, AroC"/>
    <property type="match status" value="1"/>
</dbReference>
<dbReference type="PROSITE" id="PS00787">
    <property type="entry name" value="CHORISMATE_SYNTHASE_1"/>
    <property type="match status" value="1"/>
</dbReference>
<dbReference type="PROSITE" id="PS00788">
    <property type="entry name" value="CHORISMATE_SYNTHASE_2"/>
    <property type="match status" value="1"/>
</dbReference>
<dbReference type="PROSITE" id="PS00789">
    <property type="entry name" value="CHORISMATE_SYNTHASE_3"/>
    <property type="match status" value="1"/>
</dbReference>
<accession>A1UFI9</accession>
<name>AROC_MYCSK</name>
<comment type="function">
    <text evidence="1">Catalyzes the anti-1,4-elimination of the C-3 phosphate and the C-6 proR hydrogen from 5-enolpyruvylshikimate-3-phosphate (EPSP) to yield chorismate, which is the branch point compound that serves as the starting substrate for the three terminal pathways of aromatic amino acid biosynthesis. This reaction introduces a second double bond into the aromatic ring system.</text>
</comment>
<comment type="catalytic activity">
    <reaction evidence="1">
        <text>5-O-(1-carboxyvinyl)-3-phosphoshikimate = chorismate + phosphate</text>
        <dbReference type="Rhea" id="RHEA:21020"/>
        <dbReference type="ChEBI" id="CHEBI:29748"/>
        <dbReference type="ChEBI" id="CHEBI:43474"/>
        <dbReference type="ChEBI" id="CHEBI:57701"/>
        <dbReference type="EC" id="4.2.3.5"/>
    </reaction>
</comment>
<comment type="cofactor">
    <cofactor evidence="1">
        <name>FMNH2</name>
        <dbReference type="ChEBI" id="CHEBI:57618"/>
    </cofactor>
    <text evidence="1">Reduced FMN (FMNH(2)).</text>
</comment>
<comment type="pathway">
    <text evidence="1">Metabolic intermediate biosynthesis; chorismate biosynthesis; chorismate from D-erythrose 4-phosphate and phosphoenolpyruvate: step 7/7.</text>
</comment>
<comment type="subunit">
    <text evidence="1">Homotetramer.</text>
</comment>
<comment type="similarity">
    <text evidence="1">Belongs to the chorismate synthase family.</text>
</comment>